<accession>A5N7W7</accession>
<sequence>MGKPIVAIVGRPNVGKSTLFNKLAGKRISIVEDTPGVTRDRVYAQAEWLNYNFTIIDTGGIEPENNDVIISKMRRQAQVAIETANVIIFIVDGREGLTAADKEVAQMLRKSKKPIVLVVNKIDNMKQENYIYEFYNLGIGEPISISASQGLGLGDMLDKLVENFKNEGNEDEDSEYIKIAFIGKPNVGKSSLINKLLGEERVIVSDIPGTTRDAIDSYLETDEGKFLLIDTAGVRRKSKVKEEIEKYSVIRTYTAVERADVCILMLDATHDISEQDEKIIGYAHELNKAIMVVINKWDLVDKDTKTVNKYKTSIGSSLSFMSYAPYLFISAKTGQRVNRIFKMVRECYDNYCKQIKTGILNDIIGKIVMMKEPPVVGNKRLKIYYVTQIGTKPPTFVFFVNDSKCIHFSYRRYIENQLRDSFDFTGTGIKLEFRERKE</sequence>
<evidence type="ECO:0000255" key="1">
    <source>
        <dbReference type="HAMAP-Rule" id="MF_00195"/>
    </source>
</evidence>
<feature type="chain" id="PRO_1000077653" description="GTPase Der">
    <location>
        <begin position="1"/>
        <end position="438"/>
    </location>
</feature>
<feature type="domain" description="EngA-type G 1">
    <location>
        <begin position="4"/>
        <end position="168"/>
    </location>
</feature>
<feature type="domain" description="EngA-type G 2">
    <location>
        <begin position="177"/>
        <end position="352"/>
    </location>
</feature>
<feature type="domain" description="KH-like" evidence="1">
    <location>
        <begin position="353"/>
        <end position="437"/>
    </location>
</feature>
<feature type="binding site" evidence="1">
    <location>
        <begin position="10"/>
        <end position="17"/>
    </location>
    <ligand>
        <name>GTP</name>
        <dbReference type="ChEBI" id="CHEBI:37565"/>
        <label>1</label>
    </ligand>
</feature>
<feature type="binding site" evidence="1">
    <location>
        <begin position="57"/>
        <end position="61"/>
    </location>
    <ligand>
        <name>GTP</name>
        <dbReference type="ChEBI" id="CHEBI:37565"/>
        <label>1</label>
    </ligand>
</feature>
<feature type="binding site" evidence="1">
    <location>
        <begin position="120"/>
        <end position="123"/>
    </location>
    <ligand>
        <name>GTP</name>
        <dbReference type="ChEBI" id="CHEBI:37565"/>
        <label>1</label>
    </ligand>
</feature>
<feature type="binding site" evidence="1">
    <location>
        <begin position="183"/>
        <end position="190"/>
    </location>
    <ligand>
        <name>GTP</name>
        <dbReference type="ChEBI" id="CHEBI:37565"/>
        <label>2</label>
    </ligand>
</feature>
<feature type="binding site" evidence="1">
    <location>
        <begin position="230"/>
        <end position="234"/>
    </location>
    <ligand>
        <name>GTP</name>
        <dbReference type="ChEBI" id="CHEBI:37565"/>
        <label>2</label>
    </ligand>
</feature>
<feature type="binding site" evidence="1">
    <location>
        <begin position="295"/>
        <end position="298"/>
    </location>
    <ligand>
        <name>GTP</name>
        <dbReference type="ChEBI" id="CHEBI:37565"/>
        <label>2</label>
    </ligand>
</feature>
<protein>
    <recommendedName>
        <fullName evidence="1">GTPase Der</fullName>
    </recommendedName>
    <alternativeName>
        <fullName evidence="1">GTP-binding protein EngA</fullName>
    </alternativeName>
</protein>
<gene>
    <name evidence="1" type="primary">der</name>
    <name type="synonym">engA</name>
    <name type="ordered locus">CKL_1356</name>
</gene>
<proteinExistence type="inferred from homology"/>
<dbReference type="EMBL" id="CP000673">
    <property type="protein sequence ID" value="EDK33398.1"/>
    <property type="molecule type" value="Genomic_DNA"/>
</dbReference>
<dbReference type="RefSeq" id="WP_012101745.1">
    <property type="nucleotide sequence ID" value="NC_009706.1"/>
</dbReference>
<dbReference type="SMR" id="A5N7W7"/>
<dbReference type="STRING" id="431943.CKL_1356"/>
<dbReference type="KEGG" id="ckl:CKL_1356"/>
<dbReference type="eggNOG" id="COG1160">
    <property type="taxonomic scope" value="Bacteria"/>
</dbReference>
<dbReference type="HOGENOM" id="CLU_016077_6_2_9"/>
<dbReference type="Proteomes" id="UP000002411">
    <property type="component" value="Chromosome"/>
</dbReference>
<dbReference type="GO" id="GO:0005525">
    <property type="term" value="F:GTP binding"/>
    <property type="evidence" value="ECO:0007669"/>
    <property type="project" value="UniProtKB-UniRule"/>
</dbReference>
<dbReference type="GO" id="GO:0043022">
    <property type="term" value="F:ribosome binding"/>
    <property type="evidence" value="ECO:0007669"/>
    <property type="project" value="TreeGrafter"/>
</dbReference>
<dbReference type="GO" id="GO:0042254">
    <property type="term" value="P:ribosome biogenesis"/>
    <property type="evidence" value="ECO:0007669"/>
    <property type="project" value="UniProtKB-KW"/>
</dbReference>
<dbReference type="CDD" id="cd01894">
    <property type="entry name" value="EngA1"/>
    <property type="match status" value="1"/>
</dbReference>
<dbReference type="CDD" id="cd01895">
    <property type="entry name" value="EngA2"/>
    <property type="match status" value="1"/>
</dbReference>
<dbReference type="FunFam" id="3.30.300.20:FF:000004">
    <property type="entry name" value="GTPase Der"/>
    <property type="match status" value="1"/>
</dbReference>
<dbReference type="FunFam" id="3.40.50.300:FF:000040">
    <property type="entry name" value="GTPase Der"/>
    <property type="match status" value="1"/>
</dbReference>
<dbReference type="FunFam" id="3.40.50.300:FF:000057">
    <property type="entry name" value="GTPase Der"/>
    <property type="match status" value="1"/>
</dbReference>
<dbReference type="Gene3D" id="3.30.300.20">
    <property type="match status" value="1"/>
</dbReference>
<dbReference type="Gene3D" id="3.40.50.300">
    <property type="entry name" value="P-loop containing nucleotide triphosphate hydrolases"/>
    <property type="match status" value="2"/>
</dbReference>
<dbReference type="HAMAP" id="MF_00195">
    <property type="entry name" value="GTPase_Der"/>
    <property type="match status" value="1"/>
</dbReference>
<dbReference type="InterPro" id="IPR031166">
    <property type="entry name" value="G_ENGA"/>
</dbReference>
<dbReference type="InterPro" id="IPR006073">
    <property type="entry name" value="GTP-bd"/>
</dbReference>
<dbReference type="InterPro" id="IPR016484">
    <property type="entry name" value="GTPase_Der"/>
</dbReference>
<dbReference type="InterPro" id="IPR032859">
    <property type="entry name" value="KH_dom-like"/>
</dbReference>
<dbReference type="InterPro" id="IPR015946">
    <property type="entry name" value="KH_dom-like_a/b"/>
</dbReference>
<dbReference type="InterPro" id="IPR027417">
    <property type="entry name" value="P-loop_NTPase"/>
</dbReference>
<dbReference type="InterPro" id="IPR005225">
    <property type="entry name" value="Small_GTP-bd"/>
</dbReference>
<dbReference type="NCBIfam" id="TIGR03594">
    <property type="entry name" value="GTPase_EngA"/>
    <property type="match status" value="1"/>
</dbReference>
<dbReference type="NCBIfam" id="TIGR00231">
    <property type="entry name" value="small_GTP"/>
    <property type="match status" value="2"/>
</dbReference>
<dbReference type="PANTHER" id="PTHR43834">
    <property type="entry name" value="GTPASE DER"/>
    <property type="match status" value="1"/>
</dbReference>
<dbReference type="PANTHER" id="PTHR43834:SF6">
    <property type="entry name" value="GTPASE DER"/>
    <property type="match status" value="1"/>
</dbReference>
<dbReference type="Pfam" id="PF14714">
    <property type="entry name" value="KH_dom-like"/>
    <property type="match status" value="1"/>
</dbReference>
<dbReference type="Pfam" id="PF01926">
    <property type="entry name" value="MMR_HSR1"/>
    <property type="match status" value="2"/>
</dbReference>
<dbReference type="PIRSF" id="PIRSF006485">
    <property type="entry name" value="GTP-binding_EngA"/>
    <property type="match status" value="1"/>
</dbReference>
<dbReference type="PRINTS" id="PR00326">
    <property type="entry name" value="GTP1OBG"/>
</dbReference>
<dbReference type="SUPFAM" id="SSF52540">
    <property type="entry name" value="P-loop containing nucleoside triphosphate hydrolases"/>
    <property type="match status" value="2"/>
</dbReference>
<dbReference type="PROSITE" id="PS51712">
    <property type="entry name" value="G_ENGA"/>
    <property type="match status" value="2"/>
</dbReference>
<name>DER_CLOK5</name>
<comment type="function">
    <text evidence="1">GTPase that plays an essential role in the late steps of ribosome biogenesis.</text>
</comment>
<comment type="subunit">
    <text evidence="1">Associates with the 50S ribosomal subunit.</text>
</comment>
<comment type="similarity">
    <text evidence="1">Belongs to the TRAFAC class TrmE-Era-EngA-EngB-Septin-like GTPase superfamily. EngA (Der) GTPase family.</text>
</comment>
<organism>
    <name type="scientific">Clostridium kluyveri (strain ATCC 8527 / DSM 555 / NBRC 12016 / NCIMB 10680 / K1)</name>
    <dbReference type="NCBI Taxonomy" id="431943"/>
    <lineage>
        <taxon>Bacteria</taxon>
        <taxon>Bacillati</taxon>
        <taxon>Bacillota</taxon>
        <taxon>Clostridia</taxon>
        <taxon>Eubacteriales</taxon>
        <taxon>Clostridiaceae</taxon>
        <taxon>Clostridium</taxon>
    </lineage>
</organism>
<keyword id="KW-0342">GTP-binding</keyword>
<keyword id="KW-0547">Nucleotide-binding</keyword>
<keyword id="KW-1185">Reference proteome</keyword>
<keyword id="KW-0677">Repeat</keyword>
<keyword id="KW-0690">Ribosome biogenesis</keyword>
<reference key="1">
    <citation type="journal article" date="2008" name="Proc. Natl. Acad. Sci. U.S.A.">
        <title>The genome of Clostridium kluyveri, a strict anaerobe with unique metabolic features.</title>
        <authorList>
            <person name="Seedorf H."/>
            <person name="Fricke W.F."/>
            <person name="Veith B."/>
            <person name="Brueggemann H."/>
            <person name="Liesegang H."/>
            <person name="Strittmatter A."/>
            <person name="Miethke M."/>
            <person name="Buckel W."/>
            <person name="Hinderberger J."/>
            <person name="Li F."/>
            <person name="Hagemeier C."/>
            <person name="Thauer R.K."/>
            <person name="Gottschalk G."/>
        </authorList>
    </citation>
    <scope>NUCLEOTIDE SEQUENCE [LARGE SCALE GENOMIC DNA]</scope>
    <source>
        <strain>ATCC 8527 / DSM 555 / NBRC 12016 / NCIMB 10680 / K1</strain>
    </source>
</reference>